<dbReference type="EC" id="5.4.99.27" evidence="1"/>
<dbReference type="EMBL" id="AE016823">
    <property type="protein sequence ID" value="AAS71587.1"/>
    <property type="status" value="ALT_INIT"/>
    <property type="molecule type" value="Genomic_DNA"/>
</dbReference>
<dbReference type="RefSeq" id="WP_000424589.1">
    <property type="nucleotide sequence ID" value="NC_005823.1"/>
</dbReference>
<dbReference type="SMR" id="Q72N01"/>
<dbReference type="GeneID" id="61142916"/>
<dbReference type="KEGG" id="lic:LIC_13038"/>
<dbReference type="HOGENOM" id="CLU_005281_4_1_12"/>
<dbReference type="Proteomes" id="UP000007037">
    <property type="component" value="Chromosome I"/>
</dbReference>
<dbReference type="GO" id="GO:0003723">
    <property type="term" value="F:RNA binding"/>
    <property type="evidence" value="ECO:0007669"/>
    <property type="project" value="InterPro"/>
</dbReference>
<dbReference type="GO" id="GO:0160150">
    <property type="term" value="F:tRNA pseudouridine(13) synthase activity"/>
    <property type="evidence" value="ECO:0007669"/>
    <property type="project" value="UniProtKB-EC"/>
</dbReference>
<dbReference type="GO" id="GO:0031119">
    <property type="term" value="P:tRNA pseudouridine synthesis"/>
    <property type="evidence" value="ECO:0007669"/>
    <property type="project" value="UniProtKB-UniRule"/>
</dbReference>
<dbReference type="CDD" id="cd02577">
    <property type="entry name" value="PSTD1"/>
    <property type="match status" value="1"/>
</dbReference>
<dbReference type="FunFam" id="3.30.2350.20:FF:000035">
    <property type="entry name" value="tRNA pseudouridine synthase D"/>
    <property type="match status" value="1"/>
</dbReference>
<dbReference type="Gene3D" id="3.30.2350.20">
    <property type="entry name" value="TruD, catalytic domain"/>
    <property type="match status" value="2"/>
</dbReference>
<dbReference type="HAMAP" id="MF_01082">
    <property type="entry name" value="TruD"/>
    <property type="match status" value="1"/>
</dbReference>
<dbReference type="InterPro" id="IPR020103">
    <property type="entry name" value="PsdUridine_synth_cat_dom_sf"/>
</dbReference>
<dbReference type="InterPro" id="IPR001656">
    <property type="entry name" value="PsdUridine_synth_TruD"/>
</dbReference>
<dbReference type="InterPro" id="IPR020119">
    <property type="entry name" value="PsdUridine_synth_TruD_CS"/>
</dbReference>
<dbReference type="InterPro" id="IPR011760">
    <property type="entry name" value="PsdUridine_synth_TruD_insert"/>
</dbReference>
<dbReference type="InterPro" id="IPR042214">
    <property type="entry name" value="TruD_catalytic"/>
</dbReference>
<dbReference type="PANTHER" id="PTHR13326:SF21">
    <property type="entry name" value="PSEUDOURIDYLATE SYNTHASE PUS7L"/>
    <property type="match status" value="1"/>
</dbReference>
<dbReference type="PANTHER" id="PTHR13326">
    <property type="entry name" value="TRNA PSEUDOURIDINE SYNTHASE D"/>
    <property type="match status" value="1"/>
</dbReference>
<dbReference type="Pfam" id="PF01142">
    <property type="entry name" value="TruD"/>
    <property type="match status" value="1"/>
</dbReference>
<dbReference type="PIRSF" id="PIRSF037016">
    <property type="entry name" value="Pseudouridin_synth_euk_prd"/>
    <property type="match status" value="1"/>
</dbReference>
<dbReference type="SUPFAM" id="SSF55120">
    <property type="entry name" value="Pseudouridine synthase"/>
    <property type="match status" value="1"/>
</dbReference>
<dbReference type="PROSITE" id="PS50984">
    <property type="entry name" value="TRUD"/>
    <property type="match status" value="1"/>
</dbReference>
<dbReference type="PROSITE" id="PS01268">
    <property type="entry name" value="UPF0024"/>
    <property type="match status" value="1"/>
</dbReference>
<gene>
    <name evidence="1" type="primary">truD</name>
    <name type="ordered locus">LIC_13038</name>
</gene>
<organism>
    <name type="scientific">Leptospira interrogans serogroup Icterohaemorrhagiae serovar copenhageni (strain Fiocruz L1-130)</name>
    <dbReference type="NCBI Taxonomy" id="267671"/>
    <lineage>
        <taxon>Bacteria</taxon>
        <taxon>Pseudomonadati</taxon>
        <taxon>Spirochaetota</taxon>
        <taxon>Spirochaetia</taxon>
        <taxon>Leptospirales</taxon>
        <taxon>Leptospiraceae</taxon>
        <taxon>Leptospira</taxon>
    </lineage>
</organism>
<proteinExistence type="inferred from homology"/>
<name>TRUD_LEPIC</name>
<evidence type="ECO:0000255" key="1">
    <source>
        <dbReference type="HAMAP-Rule" id="MF_01082"/>
    </source>
</evidence>
<evidence type="ECO:0000305" key="2"/>
<comment type="function">
    <text evidence="1">Responsible for synthesis of pseudouridine from uracil-13 in transfer RNAs.</text>
</comment>
<comment type="catalytic activity">
    <reaction evidence="1">
        <text>uridine(13) in tRNA = pseudouridine(13) in tRNA</text>
        <dbReference type="Rhea" id="RHEA:42540"/>
        <dbReference type="Rhea" id="RHEA-COMP:10105"/>
        <dbReference type="Rhea" id="RHEA-COMP:10106"/>
        <dbReference type="ChEBI" id="CHEBI:65314"/>
        <dbReference type="ChEBI" id="CHEBI:65315"/>
        <dbReference type="EC" id="5.4.99.27"/>
    </reaction>
</comment>
<comment type="similarity">
    <text evidence="1">Belongs to the pseudouridine synthase TruD family.</text>
</comment>
<comment type="sequence caution" evidence="2">
    <conflict type="erroneous initiation">
        <sequence resource="EMBL-CDS" id="AAS71587"/>
    </conflict>
</comment>
<accession>Q72N01</accession>
<keyword id="KW-0413">Isomerase</keyword>
<keyword id="KW-0819">tRNA processing</keyword>
<feature type="chain" id="PRO_0000152508" description="tRNA pseudouridine synthase D">
    <location>
        <begin position="1"/>
        <end position="408"/>
    </location>
</feature>
<feature type="domain" description="TRUD" evidence="1">
    <location>
        <begin position="149"/>
        <end position="362"/>
    </location>
</feature>
<feature type="active site" description="Nucleophile" evidence="1">
    <location>
        <position position="76"/>
    </location>
</feature>
<protein>
    <recommendedName>
        <fullName evidence="1">tRNA pseudouridine synthase D</fullName>
        <ecNumber evidence="1">5.4.99.27</ecNumber>
    </recommendedName>
    <alternativeName>
        <fullName evidence="1">tRNA pseudouridine(13) synthase</fullName>
    </alternativeName>
    <alternativeName>
        <fullName evidence="1">tRNA pseudouridylate synthase D</fullName>
    </alternativeName>
    <alternativeName>
        <fullName evidence="1">tRNA-uridine isomerase D</fullName>
    </alternativeName>
</protein>
<sequence>MELVQPFSGFLVYDLKQTPEDFQVEEILPSDLIQKTGKWMIFRLQKSGWNTLDALLRISKESKVSIFEIGYAGKKDRHASTSQYISCQKPLRVPKELTKVIQLDKIGFSKKSLSTELNVGNRFQLVLRNLLEKEIESIRNNFEKITKNGFINYYDSQRFSRFHSEFRLPILPFFKGDAETCLKLILTDPFPGEKKQARDRKKILYDLWGNWSQCEKWSKSKLEKNIFSNLKKEKKPTQKTYSDLILRFPEEELLMLVSSFQSLIWNEFVSEIFISDNFTGVWIKTKTGPLFFPGESSIQSVPFSKNLPVPGNPGIYKLEYSKKEIDTLKKILNQNGLTESVLDSSPFPIIKMNSFERKVRILPNDFQIGDFEEDDQHPGKRKVKISFRLPSGVYATMLIKRLMLRSRI</sequence>
<reference key="1">
    <citation type="journal article" date="2004" name="J. Bacteriol.">
        <title>Comparative genomics of two Leptospira interrogans serovars reveals novel insights into physiology and pathogenesis.</title>
        <authorList>
            <person name="Nascimento A.L.T.O."/>
            <person name="Ko A.I."/>
            <person name="Martins E.A.L."/>
            <person name="Monteiro-Vitorello C.B."/>
            <person name="Ho P.L."/>
            <person name="Haake D.A."/>
            <person name="Verjovski-Almeida S."/>
            <person name="Hartskeerl R.A."/>
            <person name="Marques M.V."/>
            <person name="Oliveira M.C."/>
            <person name="Menck C.F.M."/>
            <person name="Leite L.C.C."/>
            <person name="Carrer H."/>
            <person name="Coutinho L.L."/>
            <person name="Degrave W.M."/>
            <person name="Dellagostin O.A."/>
            <person name="El-Dorry H."/>
            <person name="Ferro E.S."/>
            <person name="Ferro M.I.T."/>
            <person name="Furlan L.R."/>
            <person name="Gamberini M."/>
            <person name="Giglioti E.A."/>
            <person name="Goes-Neto A."/>
            <person name="Goldman G.H."/>
            <person name="Goldman M.H.S."/>
            <person name="Harakava R."/>
            <person name="Jeronimo S.M.B."/>
            <person name="Junqueira-de-Azevedo I.L.M."/>
            <person name="Kimura E.T."/>
            <person name="Kuramae E.E."/>
            <person name="Lemos E.G.M."/>
            <person name="Lemos M.V.F."/>
            <person name="Marino C.L."/>
            <person name="Nunes L.R."/>
            <person name="de Oliveira R.C."/>
            <person name="Pereira G.G."/>
            <person name="Reis M.S."/>
            <person name="Schriefer A."/>
            <person name="Siqueira W.J."/>
            <person name="Sommer P."/>
            <person name="Tsai S.M."/>
            <person name="Simpson A.J.G."/>
            <person name="Ferro J.A."/>
            <person name="Camargo L.E.A."/>
            <person name="Kitajima J.P."/>
            <person name="Setubal J.C."/>
            <person name="Van Sluys M.A."/>
        </authorList>
    </citation>
    <scope>NUCLEOTIDE SEQUENCE [LARGE SCALE GENOMIC DNA]</scope>
    <source>
        <strain>Fiocruz L1-130</strain>
    </source>
</reference>